<dbReference type="EC" id="3.4.22.-"/>
<dbReference type="EC" id="3.4.21.-"/>
<dbReference type="EMBL" id="DQ310701">
    <property type="protein sequence ID" value="ABC26008.1"/>
    <property type="molecule type" value="Genomic_RNA"/>
</dbReference>
<dbReference type="EMBL" id="X56016">
    <property type="protein sequence ID" value="CAA39493.1"/>
    <property type="molecule type" value="Genomic_RNA"/>
</dbReference>
<dbReference type="EMBL" id="X52374">
    <property type="protein sequence ID" value="CAA36600.1"/>
    <property type="molecule type" value="Genomic_RNA"/>
</dbReference>
<dbReference type="PIR" id="S11237">
    <property type="entry name" value="S11237"/>
</dbReference>
<dbReference type="PIR" id="S11238">
    <property type="entry name" value="S11238"/>
</dbReference>
<dbReference type="SMR" id="P0C6F3"/>
<dbReference type="MEROPS" id="S65.001"/>
<dbReference type="Proteomes" id="UP000006571">
    <property type="component" value="Genome"/>
</dbReference>
<dbReference type="GO" id="GO:0033644">
    <property type="term" value="C:host cell membrane"/>
    <property type="evidence" value="ECO:0007669"/>
    <property type="project" value="UniProtKB-SubCell"/>
</dbReference>
<dbReference type="GO" id="GO:0016020">
    <property type="term" value="C:membrane"/>
    <property type="evidence" value="ECO:0007669"/>
    <property type="project" value="UniProtKB-KW"/>
</dbReference>
<dbReference type="GO" id="GO:0008234">
    <property type="term" value="F:cysteine-type peptidase activity"/>
    <property type="evidence" value="ECO:0007669"/>
    <property type="project" value="UniProtKB-KW"/>
</dbReference>
<dbReference type="GO" id="GO:0046872">
    <property type="term" value="F:metal ion binding"/>
    <property type="evidence" value="ECO:0007669"/>
    <property type="project" value="UniProtKB-KW"/>
</dbReference>
<dbReference type="GO" id="GO:0008236">
    <property type="term" value="F:serine-type peptidase activity"/>
    <property type="evidence" value="ECO:0007669"/>
    <property type="project" value="UniProtKB-KW"/>
</dbReference>
<dbReference type="GO" id="GO:0006508">
    <property type="term" value="P:proteolysis"/>
    <property type="evidence" value="ECO:0007669"/>
    <property type="project" value="UniProtKB-KW"/>
</dbReference>
<dbReference type="GO" id="GO:0075523">
    <property type="term" value="P:viral translational frameshifting"/>
    <property type="evidence" value="ECO:0007669"/>
    <property type="project" value="UniProtKB-KW"/>
</dbReference>
<dbReference type="CDD" id="cd21557">
    <property type="entry name" value="Macro_X_Nsp3-like"/>
    <property type="match status" value="1"/>
</dbReference>
<dbReference type="Gene3D" id="3.90.1140.10">
    <property type="entry name" value="Cyclic phosphodiesterase"/>
    <property type="match status" value="1"/>
</dbReference>
<dbReference type="Gene3D" id="3.40.220.10">
    <property type="entry name" value="Leucine Aminopeptidase, subunit E, domain 1"/>
    <property type="match status" value="1"/>
</dbReference>
<dbReference type="Gene3D" id="2.40.10.10">
    <property type="entry name" value="Trypsin-like serine proteases"/>
    <property type="match status" value="2"/>
</dbReference>
<dbReference type="InterPro" id="IPR002589">
    <property type="entry name" value="Macro_dom"/>
</dbReference>
<dbReference type="InterPro" id="IPR043472">
    <property type="entry name" value="Macro_dom-like"/>
</dbReference>
<dbReference type="InterPro" id="IPR044371">
    <property type="entry name" value="Macro_X_NSP3-like"/>
</dbReference>
<dbReference type="InterPro" id="IPR039573">
    <property type="entry name" value="NS2A-like"/>
</dbReference>
<dbReference type="InterPro" id="IPR038765">
    <property type="entry name" value="Papain-like_cys_pep_sf"/>
</dbReference>
<dbReference type="InterPro" id="IPR009003">
    <property type="entry name" value="Peptidase_S1_PA"/>
</dbReference>
<dbReference type="InterPro" id="IPR043504">
    <property type="entry name" value="Peptidase_S1_PA_chymotrypsin"/>
</dbReference>
<dbReference type="Pfam" id="PF05213">
    <property type="entry name" value="Corona_NS2A"/>
    <property type="match status" value="1"/>
</dbReference>
<dbReference type="Pfam" id="PF01661">
    <property type="entry name" value="Macro"/>
    <property type="match status" value="1"/>
</dbReference>
<dbReference type="SMART" id="SM00506">
    <property type="entry name" value="A1pp"/>
    <property type="match status" value="1"/>
</dbReference>
<dbReference type="SUPFAM" id="SSF54001">
    <property type="entry name" value="Cysteine proteinases"/>
    <property type="match status" value="1"/>
</dbReference>
<dbReference type="SUPFAM" id="SSF52949">
    <property type="entry name" value="Macro domain-like"/>
    <property type="match status" value="1"/>
</dbReference>
<dbReference type="SUPFAM" id="SSF50494">
    <property type="entry name" value="Trypsin-like serine proteases"/>
    <property type="match status" value="1"/>
</dbReference>
<dbReference type="PROSITE" id="PS51154">
    <property type="entry name" value="MACRO"/>
    <property type="match status" value="1"/>
</dbReference>
<accession>P0C6F3</accession>
<accession>P18458</accession>
<protein>
    <recommendedName>
        <fullName>Replicase polyprotein 1a</fullName>
        <shortName>pp1a</shortName>
    </recommendedName>
    <alternativeName>
        <fullName>ORF1a polyprotein</fullName>
    </alternativeName>
    <component>
        <recommendedName>
            <fullName>Papain-like proteinase</fullName>
            <shortName evidence="6">PL-PRO</shortName>
            <ecNumber>3.4.22.-</ecNumber>
        </recommendedName>
        <alternativeName>
            <fullName>Non-structural protein 1</fullName>
            <shortName>nsp1</shortName>
        </alternativeName>
    </component>
    <component>
        <recommendedName>
            <fullName>Non-structural protein 2</fullName>
            <shortName>nsp2</shortName>
        </recommendedName>
    </component>
    <component>
        <recommendedName>
            <fullName>3C-like serine proteinase</fullName>
            <shortName>3CLSP</shortName>
            <ecNumber>3.4.21.-</ecNumber>
        </recommendedName>
        <alternativeName>
            <fullName>M-PRO</fullName>
        </alternativeName>
        <alternativeName>
            <fullName>nsp3</fullName>
        </alternativeName>
        <alternativeName>
            <fullName>p27</fullName>
        </alternativeName>
    </component>
    <component>
        <recommendedName>
            <fullName>Non-structural protein 4</fullName>
            <shortName>nsp4</shortName>
        </recommendedName>
    </component>
    <component>
        <recommendedName>
            <fullName>Non-structural protein 5</fullName>
            <shortName>nsp5</shortName>
        </recommendedName>
    </component>
    <component>
        <recommendedName>
            <fullName>Non-structural protein 6</fullName>
            <shortName>nsp6</shortName>
        </recommendedName>
    </component>
    <component>
        <recommendedName>
            <fullName>Non-structural protein 7</fullName>
            <shortName>nsp7</shortName>
        </recommendedName>
    </component>
    <component>
        <recommendedName>
            <fullName>Non-structural protein 8</fullName>
            <shortName>nsp8</shortName>
        </recommendedName>
    </component>
    <component>
        <recommendedName>
            <fullName>Non-structural protein 9</fullName>
            <shortName>nsp9</shortName>
        </recommendedName>
    </component>
</protein>
<evidence type="ECO:0000250" key="1"/>
<evidence type="ECO:0000255" key="2"/>
<evidence type="ECO:0000255" key="3">
    <source>
        <dbReference type="PROSITE-ProRule" id="PRU00490"/>
    </source>
</evidence>
<evidence type="ECO:0000256" key="4">
    <source>
        <dbReference type="SAM" id="MobiDB-lite"/>
    </source>
</evidence>
<evidence type="ECO:0000269" key="5">
    <source>
    </source>
</evidence>
<evidence type="ECO:0000303" key="6">
    <source>
    </source>
</evidence>
<evidence type="ECO:0000305" key="7"/>
<evidence type="ECO:0000305" key="8">
    <source>
    </source>
</evidence>
<proteinExistence type="evidence at protein level"/>
<keyword id="KW-1043">Host membrane</keyword>
<keyword id="KW-0378">Hydrolase</keyword>
<keyword id="KW-0472">Membrane</keyword>
<keyword id="KW-0479">Metal-binding</keyword>
<keyword id="KW-0645">Protease</keyword>
<keyword id="KW-0677">Repeat</keyword>
<keyword id="KW-0688">Ribosomal frameshifting</keyword>
<keyword id="KW-0720">Serine protease</keyword>
<keyword id="KW-0788">Thiol protease</keyword>
<keyword id="KW-0812">Transmembrane</keyword>
<keyword id="KW-1133">Transmembrane helix</keyword>
<sequence>MSTSSSILDIPSKMFRILKNNTRETEQHLSSSTLDLISKSQLLAQCFDTQEIMASLSKTVRSILESQNLEHKSTLTPYNSSQSLQLLVMNTSCTQFKWTTGSTSSVKALLEKELCRGLVPLNDITPKSNYVELSLLTPSILIGNETSTTTTLPEIPLDMEQSIISCVENTLLKEVQALSGQESCQEYFLSANYQSLIPPQVLLNLMKMSSVVDLSPLTLPNTRLWLKLSPFHGGTSVSYATQIKGYANCARREEKCLKNRLTKKQKNQEKGSFDARSVITLGGKMYRYKVVVLRCEDQSDNLSELQFEPQVEYTMDMVPHCWKELVKKRLIRAKGTWDLSCVEDLDLDHVEVRGDSLLHRSSVVHDLTSIVDDTLQEKLFSRTWLRQSLKYSGNILQRLSSLFATEGLKKITLVNSDITPVQVGDKWLNFVDFGKSTVFFVKTLNNIHLAMTRQRESCNYIHEKFGRVRWLGAKPEQGAIVKVFAWCLNKKEFKFRDNQLKQYVCRQGVIKHEPCEYLNVEVLDEFVALNNDLNCVQKIKTYLAAYFGLKKVKLTQKNFMTPLITKKQELVFQPCNCPNHQFYVAQFDKHVTLGLGRKDGILFAEQVPSYAIILAVGFGTVETQLVTHYYSEMRRVYHPLDFQSNTFVFDHQGVMLEDISPADYNDVGEEDYQLEYSGGFDQPFQNYHSDDEDQAFPDFEDERHPDEENWARPIISSGESSVVSSRPSSPLVYSSLVPVASPFGYMNGIRVFDICLADDLDFLQIHGQCPCARCKGLYFYQPIRPRGFTIFENVVEFFSFVEKCEVFEEIGPFFKMIEYSMLYNEYNIFYGLGKKIYQSDLVLPVKHLDQLWKRAQLDIDVVSEFENFKNSLQNINNVVYIAPYFNDQGEWNDIFDGYEFNLNDNQFWFQAKPVYDLVCYIYQGFFSDSRPLEKLYQKLCLDYHTSAMLHTQTHLKYCYVALLHSERAFQMSINLDSLDNEQLHFLATMGMGDASLVGPTYLSEYHSNFNWYSIMSKACHYVKLEQLVGLTYQEKRLMILSRVQEFYEQQHRGPIQLILSPLKVVNLPPITCTEGYCYQPVTRLFDTCVMPDIMKKLSRKRTSVSDVFGILADYFKRTLSYRCFKVHEFCGIERQQEFSDMTTLKLVTDWCQDTYYFYNEYATMTDVEPKVQVSSDYYLKIPSEVVEHIRQFLPHNVNVGLMNYVSSNCDFDQCKFEFCLSGKGYVLGNMFFNRCAIQYVKTNLFIVLFKSRPLLYITQESIYLSDFNVLQAQCLTGEFCLDFEPVQGKTLFGVYFTNGQRYGQQWETLPRFSLKPLNSPRKRVPTQPFEELAEVCIFKQKLKLTQLHNDCSVTPRVCSIPQTITATFQPYYCLENFYGVKAPKVIVSGHLATHYVKLTHKISKCVLVTKLAVARAFYFTPTSMGSHYHLDPMEGISFGKRATVQFEPVGLIKDVNLLVYQFGSHVSIQFFPEAPCIVADGHYPSKYSGVWLGYLPSVEECKIAQVNHRVYVPTILRTSKSAPFHIIQNGDMGRGPITVTYHYAKNFDNKSLTPMFKMFQQVFEKSKDDIFKAFNTMSLEQKKVLSHFCGEFDEAYTLQTMSDEISFESSAYPDVVACSLAYILGYEMCLTVKVNAKNEKLDIGSQCERVFVDYDVKKNEWTLSPEEGEDSDDNLDLPFEQYYEFKIGQTNVVLVQDDFKSVFEFLKSEQGVDYVVNPANSQLKHGGGIAKVISCMCGPKLQAWSNNYITKNKTVPVTKAIKSPGFQLGKKVNIIHAVGPRVSDGDVFQKLDQAWRSVFDLCEDQHTILTSMLSTGIFGCTVNDSFNTFLSNVARLDKSLVVFVVTNMVEQYNQAFAVIKMYQQYHGLPNFGNTCWFNALYQLLKSFSEKEQCVNDLLNCFDDFYDCPTSQCVEWVCEQLGVQFGQQQDAVEMLMKVFDVFKCDVRVGFDCLSRLQQVNCGFCVEVPAQAVLMFSGKDQCGHWTAARKIVDKWYTFDDNHVVQKDPVWQNVVLVLRDRGIFRSADFERKPARRRRVSHRVPRDTLSQDAITYIEDLRFSSGTCLSRYFVESVESFVSGDNVSEVSDEQTCVEVAIEESDGHVEQICQSSVDCVGMPESFQFTFSMPLQTFVQECDQKCEDDFSQEHVECDQQFEPVEQVGQGGQQDGQVDQQIKESEQVVEPSAPSGQESPQALLQQVVDEVVYQIEQVKCDQKQDQDSVQCDEIEEINSRGEQTVQQQLQPILGHDLNENEGPTLSVGAGKLVRCRSLAVTESNLSTSNTIFVWSEVLTHQYIGFKTDLMGLTYNIKFKLICYVLFLWFGVLCCTSHNTPFYMRLCIYLVLLWLSLMIWNASQINVKTGWNELYVLKLLTSIKLPNIVKFRCELVQWFVLKCLFVSFYVYDYVVKVCVSIFQMPQLRPFTWPFIKLGFVDTFLSHHILAFPEKVANQSTLPTCGDKRYYVYVPSWCRASFTSLVMRARELTSTGRSKTLDNWHYQCCSKTAKPLSCFNVREFVFDQDCKHEAYGFLSSLCVYLLFYSGFLTFWLPLFCYYYVLFMCTFKNLPVDITKPIKWTVLQQVVNDVLSLVTKPLFGRPVCPPLTTYLTSTTADEAVKVSRSLLGRFCTPLGFQQPVMNVENGVTVSNFGFFNPLMWPLFVVVLLDNRFIWFFNVLSYVMMPVFVIILFYFYLKKICGCINFKGLSKCCTKHFNQFSKPLVAAGVHGNRTNFTYQPMQEHWCDRHSWYCPKEEHYMTPDMAVYIKNYYNLACAPTADLVWCDYTKSAPTMTWSNFKYSSYKAKETVLCAPSSHADSMLMAWYALLHNVRFTVNPNVVDLPPAVNTIYVSSDSEDSVQDKSQPDVKLRPKKPKGNFKKQSVAYFSREPVDIWYYTTLVIVMGVLFMFMYSCLMVGQYVVMPRDKFFGVNPTGYSYVNAPPYLHAAPPVLQNSDGMILATQLKVPSITYSVYRLLSGHLYFTKLIVSDNECTPPFGAARLSNEFSCNGFTYVLPAHLRFFNRYVMLIHPDQLHMLPFEVEYGSHTRVCYTTGSNSVECLPTFEIISPYVFVFIVVIFTVIFLILIRLYIVMYSYFKVFTYVVFKLLFVNIIMVLFVVCLPPLVPGVVFVLALWLCDSVMFLLYLAFLSLFILPWFYVLFFLFMVGGFVFWWMMRSADVVHLTTDGLTFNGTFEQISKCVFPLNPLIVNRMLLDCQMSHSDLVEKSKLKTTEGKLANEMMKVFMTGETSYYQPSNFSFQSVFSKATSPFTLHARPPMPMFKLYVHFTGSCVGSTSTGTGFAIDDNTIVTAKHLFEYDDLKPTHVSVEIVTRSHSARSASIIWKEPDVKGWTFKGENAYIQVENLKDFYIEDFKYLPFQQIEKDFYKRMEPVTIYSVKYGSEFATQAWQTVNGHFVCYNTEGGDSGAPLVCNGRIVGVHQGLCDNFKTTLASDFEGKMMTEVKGHHVDPPVYYKPIIISAAYNKFVAGEDSSVGDGKNYHKFENEDFACMCKELESVTFGDQLRRYCYNLPQFLEPLQYFHVPSFWQPFKKQSVSNNVSWVVEHLHFIFSIYFLICDFVAYWWLDDPFSVVLPLFFIVQLLSTVFLKNVLFWTTSYLITLAVTFYIHSEVAESMFLLGFLSDRVVNRMSLIIVVAIMCLFVVVRVVVNVKRAIFVFVVSVVLIFVHICLGIVQFNSFVNVVLFDVYAVFTALLTPQPVVAIIMLLLFDTKMLMSFAFIVIVLSFRVFKDYKFVKVLHNFCNFDFVLSQVSLFRYRHRNQGNDPTHYEALWLFLKELYYGIQDAKYEVFSPQAGSYNVKFLTDMTEQDQLEAVEQVQRRLQRFNIVQDKASPRLVLYSKTIEFIKDQIQQQRAVGANPFIITTLTSNDIGLDNVEVHNPANFKPEDLQAHMWFFSKSPVFIGQVPIPTNVQTAAVLDTTYNCQDLTADEKNNVAATLQIQNAAITLSLFEKCTQFLESELGEVPTLMWQAEDVADIKHLESQIENLRKVLDGMQFGTTEYKATRKQLNICQSQLDQAKAFERKLAKFLEKVDQQQAITNETAKQLSAFKNLVKQVYESYMSSLKVKVLEANDASCLLTSTDLPRKLVLMRPITGVDGIKIVEKANGCEITAFGTTFNTGHGSNLAGLAYSTTQPLSAYPFIFNLEGIFKQQANIGYKTVECNMSSHNGSVLYKGKVVAVPSDDNPDFVVCGKGYKLDCGINVLMIPSIVRYITLNLTDHLQKQSLKPRRRLQYRQQGVRLGGVNLGEHQAFSNELISTVGYTTWVSSTVCRDNTHKHPWFVQIPVNEKDPEWFMHNTQLKDNQWVVDLKPTHWLVNADTGEQLFALSLTDEQALKAEAILQKWSPITQDVECWFKDLKGYYTVSGFQPLWPVCPVNICNVRLDPVFKPQSIVYADDPTHFLSLPVVNKNFLAAFYDLQEGFPGKKQVAPHISLTMLKLSDEDIEKVEDILDEMVLPNSWVTITNPHMMGKHYVCDVEGLDSLHDEVVSVLREHGIACDQKRLWKPHLTIGELNDVSFDKFKDFAISCKLEDCDFVKLGAPKANARYEFITTLPLGDLNC</sequence>
<gene>
    <name type="ORF">1a</name>
</gene>
<reference key="1">
    <citation type="journal article" date="2006" name="J. Virol.">
        <title>Characterization of a torovirus main proteinase.</title>
        <authorList>
            <person name="Smits S.L."/>
            <person name="Snijder E.J."/>
            <person name="de Groot R.J."/>
        </authorList>
    </citation>
    <scope>NUCLEOTIDE SEQUENCE [GENOMIC RNA]</scope>
    <scope>CHARACTERIZATION OF 3C-LIKE PROTEINASE M-PRO</scope>
    <scope>PROTEOLYTIC PROCESSING (REPLICASE POLYPROTEIN 1A)</scope>
</reference>
<reference key="2">
    <citation type="journal article" date="1991" name="J. Gen. Virol.">
        <title>Characterization of defective interfering RNAs of Berne virus.</title>
        <authorList>
            <person name="Snijder E.J."/>
            <person name="den Boon J.A."/>
            <person name="Horzinek M.C."/>
            <person name="Spaan J.M."/>
        </authorList>
    </citation>
    <scope>NUCLEOTIDE SEQUENCE [GENOMIC RNA] OF 1-252</scope>
</reference>
<reference key="3">
    <citation type="journal article" date="1990" name="Nucleic Acids Res.">
        <title>The carboxyl-terminal part of the putative Berne virus polymerase is expressed by ribosomal frameshifting and contains sequence motifs which indicate that toro- and coronaviruses are evolutionarily related.</title>
        <authorList>
            <person name="Snijder E.J."/>
            <person name="den Boon J.A."/>
            <person name="Bredenbeek P.J."/>
            <person name="Horzinek M.C."/>
            <person name="Rijnbrand R."/>
            <person name="Spaan W.J.M."/>
        </authorList>
    </citation>
    <scope>NUCLEOTIDE SEQUENCE [GENOMIC RNA] OF 4219-4569</scope>
    <source>
        <strain>Isolate P138/72</strain>
    </source>
</reference>
<reference key="4">
    <citation type="journal article" date="2021" name="Viruses">
        <title>Recent Progress in Torovirus Molecular Biology.</title>
        <authorList>
            <person name="Ujike M."/>
            <person name="Taguchi F."/>
        </authorList>
    </citation>
    <scope>DOMAIN (3C-LIKE SERINE PROTEINASE)</scope>
    <scope>CATALYTIC ACTIVITY (3C-LIKE SERINE PROTEINASE)</scope>
    <scope>FUNCTION (3C-LIKE SERINE PROTEINASE)</scope>
    <scope>ACTIVE SITE (3C-LIKE SERINE PROTEINASE)</scope>
</reference>
<organism>
    <name type="scientific">Berne virus</name>
    <name type="common">BEV</name>
    <dbReference type="NCBI Taxonomy" id="11156"/>
    <lineage>
        <taxon>Viruses</taxon>
        <taxon>Riboviria</taxon>
        <taxon>Orthornavirae</taxon>
        <taxon>Pisuviricota</taxon>
        <taxon>Pisoniviricetes</taxon>
        <taxon>Nidovirales</taxon>
        <taxon>Tornidovirineae</taxon>
        <taxon>Tobaniviridae</taxon>
        <taxon>Torovirinae</taxon>
        <taxon>Torovirus</taxon>
        <taxon>Renitovirus</taxon>
        <taxon>Equine torovirus</taxon>
    </lineage>
</organism>
<organismHost>
    <name type="scientific">Equus caballus</name>
    <name type="common">Horse</name>
    <dbReference type="NCBI Taxonomy" id="9796"/>
</organismHost>
<comment type="function">
    <molecule>3C-like serine proteinase</molecule>
    <text evidence="5">The 3C-like serine proteinase is responsible for the majority of cleavages.</text>
</comment>
<comment type="subcellular location">
    <molecule>Papain-like proteinase</molecule>
    <subcellularLocation>
        <location evidence="7">Host membrane</location>
        <topology evidence="7">Multi-pass membrane protein</topology>
    </subcellularLocation>
</comment>
<comment type="subcellular location">
    <molecule>Non-structural protein 2</molecule>
    <subcellularLocation>
        <location evidence="7">Host membrane</location>
        <topology evidence="7">Multi-pass membrane protein</topology>
    </subcellularLocation>
</comment>
<comment type="subcellular location">
    <molecule>Non-structural protein 4</molecule>
    <subcellularLocation>
        <location evidence="7">Host membrane</location>
        <topology evidence="7">Multi-pass membrane protein</topology>
    </subcellularLocation>
</comment>
<comment type="alternative products">
    <event type="ribosomal frameshifting"/>
    <isoform>
        <id>P0C6F3-1</id>
        <name>Replicase polyprotein 1a</name>
        <name>pp1a</name>
        <name>ORF1a polyprotein</name>
        <sequence type="displayed"/>
    </isoform>
    <isoform>
        <id>P0C6V7-1</id>
        <name>Replicase polyprotein 1ab</name>
        <name>pp1ab</name>
        <sequence type="external"/>
    </isoform>
</comment>
<comment type="domain">
    <text evidence="1">The hydrophobic domains (HD) could mediate the membrane association of the replication complex and thereby alter the architecture of the host cell membrane.</text>
</comment>
<comment type="PTM">
    <molecule>Isoform Replicase polyprotein 1a</molecule>
    <text evidence="5">Specific enzymatic cleavages in vivo by its own protease yield mature proteins. 3CL-PRO is autocatalytically processed.</text>
</comment>
<comment type="miscellaneous">
    <molecule>Isoform Replicase polyprotein 1a</molecule>
    <text>Produced by conventional translation.</text>
</comment>
<name>R1A_BEV</name>
<feature type="chain" id="PRO_0000338016" description="Replicase polyprotein 1a">
    <location>
        <begin position="1"/>
        <end position="4569"/>
    </location>
</feature>
<feature type="chain" id="PRO_0000338017" description="Papain-like proteinase" evidence="2">
    <location>
        <begin position="1"/>
        <end position="2873"/>
    </location>
</feature>
<feature type="chain" id="PRO_0000338018" description="Non-structural protein 2" evidence="2">
    <location>
        <begin position="2874"/>
        <end position="3251"/>
    </location>
</feature>
<feature type="chain" id="PRO_0000338020" description="3C-like serine proteinase" evidence="2">
    <location>
        <begin position="3252"/>
        <end position="3543"/>
    </location>
</feature>
<feature type="chain" id="PRO_0000338021" description="Non-structural protein 4" evidence="2">
    <location>
        <begin position="3544"/>
        <end position="3802"/>
    </location>
</feature>
<feature type="chain" id="PRO_0000338022" description="Non-structural protein 5" evidence="2">
    <location>
        <begin position="3803"/>
        <end position="3979"/>
    </location>
</feature>
<feature type="chain" id="PRO_0000338023" description="Non-structural protein 6" evidence="2">
    <location>
        <begin position="3980"/>
        <end position="4161"/>
    </location>
</feature>
<feature type="chain" id="PRO_0000338024" description="Non-structural protein 7" evidence="2">
    <location>
        <begin position="4162"/>
        <end position="4246"/>
    </location>
</feature>
<feature type="chain" id="PRO_0000338025" description="Non-structural protein 8" evidence="2">
    <location>
        <begin position="4247"/>
        <end position="4399"/>
    </location>
</feature>
<feature type="chain" id="PRO_0000338026" description="Non-structural protein 9" evidence="2">
    <location>
        <begin position="4400"/>
        <end position="4569"/>
    </location>
</feature>
<feature type="transmembrane region" description="Helical" evidence="2">
    <location>
        <begin position="2303"/>
        <end position="2323"/>
    </location>
</feature>
<feature type="transmembrane region" description="Helical" evidence="2">
    <location>
        <begin position="2330"/>
        <end position="2350"/>
    </location>
</feature>
<feature type="transmembrane region" description="Helical" evidence="2">
    <location>
        <begin position="2385"/>
        <end position="2405"/>
    </location>
</feature>
<feature type="transmembrane region" description="Helical" evidence="2">
    <location>
        <begin position="2535"/>
        <end position="2555"/>
    </location>
</feature>
<feature type="transmembrane region" description="Helical" evidence="2">
    <location>
        <begin position="2639"/>
        <end position="2659"/>
    </location>
</feature>
<feature type="transmembrane region" description="Helical" evidence="2">
    <location>
        <begin position="2664"/>
        <end position="2684"/>
    </location>
</feature>
<feature type="transmembrane region" description="Helical" evidence="2">
    <location>
        <begin position="2889"/>
        <end position="2909"/>
    </location>
</feature>
<feature type="transmembrane region" description="Helical" evidence="2">
    <location>
        <begin position="3057"/>
        <end position="3077"/>
    </location>
</feature>
<feature type="transmembrane region" description="Helical" evidence="2">
    <location>
        <begin position="3106"/>
        <end position="3126"/>
    </location>
</feature>
<feature type="transmembrane region" description="Helical" evidence="2">
    <location>
        <begin position="3142"/>
        <end position="3162"/>
    </location>
</feature>
<feature type="transmembrane region" description="Helical" evidence="2">
    <location>
        <begin position="3556"/>
        <end position="3575"/>
    </location>
</feature>
<feature type="transmembrane region" description="Helical" evidence="2">
    <location>
        <begin position="3580"/>
        <end position="3602"/>
    </location>
</feature>
<feature type="transmembrane region" description="Helical" evidence="2">
    <location>
        <begin position="3611"/>
        <end position="3631"/>
    </location>
</feature>
<feature type="transmembrane region" description="Helical" evidence="2">
    <location>
        <begin position="3640"/>
        <end position="3660"/>
    </location>
</feature>
<feature type="transmembrane region" description="Helical" evidence="2">
    <location>
        <begin position="3663"/>
        <end position="3683"/>
    </location>
</feature>
<feature type="transmembrane region" description="Helical" evidence="2">
    <location>
        <begin position="3698"/>
        <end position="3718"/>
    </location>
</feature>
<feature type="transmembrane region" description="Helical" evidence="2">
    <location>
        <begin position="3723"/>
        <end position="3738"/>
    </location>
</feature>
<feature type="domain" description="Macro" evidence="3">
    <location>
        <begin position="1679"/>
        <end position="1860"/>
    </location>
</feature>
<feature type="region of interest" description="Disordered" evidence="4">
    <location>
        <begin position="2158"/>
        <end position="2191"/>
    </location>
</feature>
<feature type="region of interest" description="HD1">
    <location>
        <begin position="2303"/>
        <end position="2683"/>
    </location>
</feature>
<feature type="region of interest" description="HD2">
    <location>
        <begin position="2889"/>
        <end position="3162"/>
    </location>
</feature>
<feature type="region of interest" description="HD3">
    <location>
        <begin position="3555"/>
        <end position="3738"/>
    </location>
</feature>
<feature type="active site" description="Charge relay system; for 3C-like serine proteinase activity" evidence="5">
    <location>
        <position position="3304"/>
    </location>
</feature>
<feature type="active site" description="Charge relay system; for 3C-like serine proteinase activity" evidence="8">
    <location>
        <position position="3347"/>
    </location>
</feature>
<feature type="active site" description="Charge relay system; for 3C-like serine proteinase activity" evidence="5">
    <location>
        <position position="3416"/>
    </location>
</feature>
<feature type="site" description="Cleavage; by 3C-like serine proteinase" evidence="8">
    <location>
        <begin position="2873"/>
        <end position="2874"/>
    </location>
</feature>
<feature type="site" description="Cleavage; by 3C-like serine proteinase" evidence="5">
    <location>
        <begin position="3251"/>
        <end position="3252"/>
    </location>
</feature>
<feature type="site" description="Cleavage; by 3C-like serine proteinase" evidence="5">
    <location>
        <begin position="3543"/>
        <end position="3544"/>
    </location>
</feature>
<feature type="site" description="Cleavage; by 3C-like serine proteinase" evidence="8">
    <location>
        <begin position="3802"/>
        <end position="3803"/>
    </location>
</feature>
<feature type="site" description="Cleavage; by 3C-like serine proteinase" evidence="8">
    <location>
        <begin position="3979"/>
        <end position="3980"/>
    </location>
</feature>
<feature type="site" description="Cleavage; by 3C-like serine proteinase" evidence="8">
    <location>
        <begin position="4161"/>
        <end position="4162"/>
    </location>
</feature>
<feature type="site" description="Cleavage; by 3C-like serine proteinase" evidence="8">
    <location>
        <begin position="4246"/>
        <end position="4247"/>
    </location>
</feature>
<feature type="site" description="Cleavage; by 3C-like serine proteinase" evidence="8">
    <location>
        <begin position="4399"/>
        <end position="4400"/>
    </location>
</feature>
<feature type="sequence conflict" description="In Ref. 2; CAA39493." evidence="7" ref="2">
    <original>RR</original>
    <variation>KK</variation>
    <location>
        <begin position="251"/>
        <end position="252"/>
    </location>
</feature>